<protein>
    <recommendedName>
        <fullName>TPR repeat-containing protein TP_0123</fullName>
    </recommendedName>
</protein>
<feature type="chain" id="PRO_0000106453" description="TPR repeat-containing protein TP_0123">
    <location>
        <begin position="1"/>
        <end position="856"/>
    </location>
</feature>
<feature type="repeat" description="TPR 1">
    <location>
        <begin position="107"/>
        <end position="140"/>
    </location>
</feature>
<feature type="repeat" description="TPR 2">
    <location>
        <begin position="523"/>
        <end position="556"/>
    </location>
</feature>
<feature type="repeat" description="TPR 3">
    <location>
        <begin position="603"/>
        <end position="636"/>
    </location>
</feature>
<sequence>MSLSPQGADMSGVLYLGRFTLCLLPVSCFSQKVMTCADTVRGAQEVFMLCIYVELPYYYQLTRIFPADIESLCARMRRFAVHNGAALHEASSVRIFAFEAHSLGSVYAAVRCVRALYQTLDTYEKQVKEFRILMDVVADDASPCLIEDRFHAYRSTLIPDRGFFASFRAKQLLKHYLEFLPLPALNMYQVNGFLSLCAEKPFPQGVTTHCIVVRTTSSYMSALCNFMALHPLSEAVYSTLSEETRAFFFHLRAAVSFFKRRRYDSSFPQYLTDAFLQYVGLYFKLYYEAAPNAAPPPIYVDPCAGHESQKQAEKVLIVSPHSPLMRLPASCADIEAIPQDLAEVMYTLSLASRYIFADEIEEFFLFLKKHADFVGDLFDKMFCTQVTMVPHNAYAIPEDVHDSLEKRVRVKMPVIRECISSFLWKKYQEGSLCASTDLLRTFQELQYKYTSDCVLHSLFHTYSDVQIAHLQVEEYTGTDVGAVLKVYQHTLLVGMREDAEAAFREAKACLTTLQARRFVSAEYRTFSLLGFLTIGQSKFEDALVYFGYALDDAEQLRDGDFLCSALFHLSITYFLQHNFTQARLFLSKLSDAISTYFEQRWKTVSLFMQGRISLSLGEYAQARRCFDEAADFALQYFEHQEPLCRVWAAHARLLADKSYAAHALFQDMCDQYPDAYLFLVESYVRAECFDDPTLFQSFPEETTSREPCVPSFSLDTPIYSGFSCAEDLVWGRQCAFAVSAQHSTVFAHYYHCRVHLHRAEDMQTFHHHKQKLEAIARRAFQIGDPSAALFLYLCYDVSYRVHGAEAAVTTAHLSRAFKVMQRSVAYMSENTVRAQFMQDNFWNAKLFAAAQANKLI</sequence>
<dbReference type="EMBL" id="AE000520">
    <property type="protein sequence ID" value="AAC65115.1"/>
    <property type="molecule type" value="Genomic_DNA"/>
</dbReference>
<dbReference type="PIR" id="B71364">
    <property type="entry name" value="B71364"/>
</dbReference>
<dbReference type="SMR" id="O83160"/>
<dbReference type="STRING" id="243276.TP_0123"/>
<dbReference type="EnsemblBacteria" id="AAC65115">
    <property type="protein sequence ID" value="AAC65115"/>
    <property type="gene ID" value="TP_0123"/>
</dbReference>
<dbReference type="KEGG" id="tpa:TP_0123"/>
<dbReference type="KEGG" id="tpw:TPANIC_0123"/>
<dbReference type="eggNOG" id="COG0457">
    <property type="taxonomic scope" value="Bacteria"/>
</dbReference>
<dbReference type="HOGENOM" id="CLU_347775_0_0_12"/>
<dbReference type="Proteomes" id="UP000000811">
    <property type="component" value="Chromosome"/>
</dbReference>
<dbReference type="Gene3D" id="1.25.40.10">
    <property type="entry name" value="Tetratricopeptide repeat domain"/>
    <property type="match status" value="1"/>
</dbReference>
<dbReference type="InterPro" id="IPR011990">
    <property type="entry name" value="TPR-like_helical_dom_sf"/>
</dbReference>
<dbReference type="SUPFAM" id="SSF48452">
    <property type="entry name" value="TPR-like"/>
    <property type="match status" value="1"/>
</dbReference>
<accession>O83160</accession>
<gene>
    <name type="ordered locus">TP_0123</name>
</gene>
<reference key="1">
    <citation type="journal article" date="1998" name="Science">
        <title>Complete genome sequence of Treponema pallidum, the syphilis spirochete.</title>
        <authorList>
            <person name="Fraser C.M."/>
            <person name="Norris S.J."/>
            <person name="Weinstock G.M."/>
            <person name="White O."/>
            <person name="Sutton G.G."/>
            <person name="Dodson R.J."/>
            <person name="Gwinn M.L."/>
            <person name="Hickey E.K."/>
            <person name="Clayton R.A."/>
            <person name="Ketchum K.A."/>
            <person name="Sodergren E."/>
            <person name="Hardham J.M."/>
            <person name="McLeod M.P."/>
            <person name="Salzberg S.L."/>
            <person name="Peterson J.D."/>
            <person name="Khalak H.G."/>
            <person name="Richardson D.L."/>
            <person name="Howell J.K."/>
            <person name="Chidambaram M."/>
            <person name="Utterback T.R."/>
            <person name="McDonald L.A."/>
            <person name="Artiach P."/>
            <person name="Bowman C."/>
            <person name="Cotton M.D."/>
            <person name="Fujii C."/>
            <person name="Garland S.A."/>
            <person name="Hatch B."/>
            <person name="Horst K."/>
            <person name="Roberts K.M."/>
            <person name="Sandusky M."/>
            <person name="Weidman J.F."/>
            <person name="Smith H.O."/>
            <person name="Venter J.C."/>
        </authorList>
    </citation>
    <scope>NUCLEOTIDE SEQUENCE [LARGE SCALE GENOMIC DNA]</scope>
    <source>
        <strain>Nichols</strain>
    </source>
</reference>
<organism>
    <name type="scientific">Treponema pallidum (strain Nichols)</name>
    <dbReference type="NCBI Taxonomy" id="243276"/>
    <lineage>
        <taxon>Bacteria</taxon>
        <taxon>Pseudomonadati</taxon>
        <taxon>Spirochaetota</taxon>
        <taxon>Spirochaetia</taxon>
        <taxon>Spirochaetales</taxon>
        <taxon>Treponemataceae</taxon>
        <taxon>Treponema</taxon>
    </lineage>
</organism>
<proteinExistence type="predicted"/>
<name>Y123_TREPA</name>
<keyword id="KW-1185">Reference proteome</keyword>
<keyword id="KW-0677">Repeat</keyword>
<keyword id="KW-0802">TPR repeat</keyword>